<reference key="1">
    <citation type="journal article" date="2000" name="Science">
        <title>The genome sequence of Drosophila melanogaster.</title>
        <authorList>
            <person name="Adams M.D."/>
            <person name="Celniker S.E."/>
            <person name="Holt R.A."/>
            <person name="Evans C.A."/>
            <person name="Gocayne J.D."/>
            <person name="Amanatides P.G."/>
            <person name="Scherer S.E."/>
            <person name="Li P.W."/>
            <person name="Hoskins R.A."/>
            <person name="Galle R.F."/>
            <person name="George R.A."/>
            <person name="Lewis S.E."/>
            <person name="Richards S."/>
            <person name="Ashburner M."/>
            <person name="Henderson S.N."/>
            <person name="Sutton G.G."/>
            <person name="Wortman J.R."/>
            <person name="Yandell M.D."/>
            <person name="Zhang Q."/>
            <person name="Chen L.X."/>
            <person name="Brandon R.C."/>
            <person name="Rogers Y.-H.C."/>
            <person name="Blazej R.G."/>
            <person name="Champe M."/>
            <person name="Pfeiffer B.D."/>
            <person name="Wan K.H."/>
            <person name="Doyle C."/>
            <person name="Baxter E.G."/>
            <person name="Helt G."/>
            <person name="Nelson C.R."/>
            <person name="Miklos G.L.G."/>
            <person name="Abril J.F."/>
            <person name="Agbayani A."/>
            <person name="An H.-J."/>
            <person name="Andrews-Pfannkoch C."/>
            <person name="Baldwin D."/>
            <person name="Ballew R.M."/>
            <person name="Basu A."/>
            <person name="Baxendale J."/>
            <person name="Bayraktaroglu L."/>
            <person name="Beasley E.M."/>
            <person name="Beeson K.Y."/>
            <person name="Benos P.V."/>
            <person name="Berman B.P."/>
            <person name="Bhandari D."/>
            <person name="Bolshakov S."/>
            <person name="Borkova D."/>
            <person name="Botchan M.R."/>
            <person name="Bouck J."/>
            <person name="Brokstein P."/>
            <person name="Brottier P."/>
            <person name="Burtis K.C."/>
            <person name="Busam D.A."/>
            <person name="Butler H."/>
            <person name="Cadieu E."/>
            <person name="Center A."/>
            <person name="Chandra I."/>
            <person name="Cherry J.M."/>
            <person name="Cawley S."/>
            <person name="Dahlke C."/>
            <person name="Davenport L.B."/>
            <person name="Davies P."/>
            <person name="de Pablos B."/>
            <person name="Delcher A."/>
            <person name="Deng Z."/>
            <person name="Mays A.D."/>
            <person name="Dew I."/>
            <person name="Dietz S.M."/>
            <person name="Dodson K."/>
            <person name="Doup L.E."/>
            <person name="Downes M."/>
            <person name="Dugan-Rocha S."/>
            <person name="Dunkov B.C."/>
            <person name="Dunn P."/>
            <person name="Durbin K.J."/>
            <person name="Evangelista C.C."/>
            <person name="Ferraz C."/>
            <person name="Ferriera S."/>
            <person name="Fleischmann W."/>
            <person name="Fosler C."/>
            <person name="Gabrielian A.E."/>
            <person name="Garg N.S."/>
            <person name="Gelbart W.M."/>
            <person name="Glasser K."/>
            <person name="Glodek A."/>
            <person name="Gong F."/>
            <person name="Gorrell J.H."/>
            <person name="Gu Z."/>
            <person name="Guan P."/>
            <person name="Harris M."/>
            <person name="Harris N.L."/>
            <person name="Harvey D.A."/>
            <person name="Heiman T.J."/>
            <person name="Hernandez J.R."/>
            <person name="Houck J."/>
            <person name="Hostin D."/>
            <person name="Houston K.A."/>
            <person name="Howland T.J."/>
            <person name="Wei M.-H."/>
            <person name="Ibegwam C."/>
            <person name="Jalali M."/>
            <person name="Kalush F."/>
            <person name="Karpen G.H."/>
            <person name="Ke Z."/>
            <person name="Kennison J.A."/>
            <person name="Ketchum K.A."/>
            <person name="Kimmel B.E."/>
            <person name="Kodira C.D."/>
            <person name="Kraft C.L."/>
            <person name="Kravitz S."/>
            <person name="Kulp D."/>
            <person name="Lai Z."/>
            <person name="Lasko P."/>
            <person name="Lei Y."/>
            <person name="Levitsky A.A."/>
            <person name="Li J.H."/>
            <person name="Li Z."/>
            <person name="Liang Y."/>
            <person name="Lin X."/>
            <person name="Liu X."/>
            <person name="Mattei B."/>
            <person name="McIntosh T.C."/>
            <person name="McLeod M.P."/>
            <person name="McPherson D."/>
            <person name="Merkulov G."/>
            <person name="Milshina N.V."/>
            <person name="Mobarry C."/>
            <person name="Morris J."/>
            <person name="Moshrefi A."/>
            <person name="Mount S.M."/>
            <person name="Moy M."/>
            <person name="Murphy B."/>
            <person name="Murphy L."/>
            <person name="Muzny D.M."/>
            <person name="Nelson D.L."/>
            <person name="Nelson D.R."/>
            <person name="Nelson K.A."/>
            <person name="Nixon K."/>
            <person name="Nusskern D.R."/>
            <person name="Pacleb J.M."/>
            <person name="Palazzolo M."/>
            <person name="Pittman G.S."/>
            <person name="Pan S."/>
            <person name="Pollard J."/>
            <person name="Puri V."/>
            <person name="Reese M.G."/>
            <person name="Reinert K."/>
            <person name="Remington K."/>
            <person name="Saunders R.D.C."/>
            <person name="Scheeler F."/>
            <person name="Shen H."/>
            <person name="Shue B.C."/>
            <person name="Siden-Kiamos I."/>
            <person name="Simpson M."/>
            <person name="Skupski M.P."/>
            <person name="Smith T.J."/>
            <person name="Spier E."/>
            <person name="Spradling A.C."/>
            <person name="Stapleton M."/>
            <person name="Strong R."/>
            <person name="Sun E."/>
            <person name="Svirskas R."/>
            <person name="Tector C."/>
            <person name="Turner R."/>
            <person name="Venter E."/>
            <person name="Wang A.H."/>
            <person name="Wang X."/>
            <person name="Wang Z.-Y."/>
            <person name="Wassarman D.A."/>
            <person name="Weinstock G.M."/>
            <person name="Weissenbach J."/>
            <person name="Williams S.M."/>
            <person name="Woodage T."/>
            <person name="Worley K.C."/>
            <person name="Wu D."/>
            <person name="Yang S."/>
            <person name="Yao Q.A."/>
            <person name="Ye J."/>
            <person name="Yeh R.-F."/>
            <person name="Zaveri J.S."/>
            <person name="Zhan M."/>
            <person name="Zhang G."/>
            <person name="Zhao Q."/>
            <person name="Zheng L."/>
            <person name="Zheng X.H."/>
            <person name="Zhong F.N."/>
            <person name="Zhong W."/>
            <person name="Zhou X."/>
            <person name="Zhu S.C."/>
            <person name="Zhu X."/>
            <person name="Smith H.O."/>
            <person name="Gibbs R.A."/>
            <person name="Myers E.W."/>
            <person name="Rubin G.M."/>
            <person name="Venter J.C."/>
        </authorList>
    </citation>
    <scope>NUCLEOTIDE SEQUENCE [LARGE SCALE GENOMIC DNA]</scope>
    <source>
        <strain>Berkeley</strain>
    </source>
</reference>
<reference key="2">
    <citation type="journal article" date="2002" name="Genome Biol.">
        <title>Annotation of the Drosophila melanogaster euchromatic genome: a systematic review.</title>
        <authorList>
            <person name="Misra S."/>
            <person name="Crosby M.A."/>
            <person name="Mungall C.J."/>
            <person name="Matthews B.B."/>
            <person name="Campbell K.S."/>
            <person name="Hradecky P."/>
            <person name="Huang Y."/>
            <person name="Kaminker J.S."/>
            <person name="Millburn G.H."/>
            <person name="Prochnik S.E."/>
            <person name="Smith C.D."/>
            <person name="Tupy J.L."/>
            <person name="Whitfield E.J."/>
            <person name="Bayraktaroglu L."/>
            <person name="Berman B.P."/>
            <person name="Bettencourt B.R."/>
            <person name="Celniker S.E."/>
            <person name="de Grey A.D.N.J."/>
            <person name="Drysdale R.A."/>
            <person name="Harris N.L."/>
            <person name="Richter J."/>
            <person name="Russo S."/>
            <person name="Schroeder A.J."/>
            <person name="Shu S.Q."/>
            <person name="Stapleton M."/>
            <person name="Yamada C."/>
            <person name="Ashburner M."/>
            <person name="Gelbart W.M."/>
            <person name="Rubin G.M."/>
            <person name="Lewis S.E."/>
        </authorList>
    </citation>
    <scope>GENOME REANNOTATION</scope>
    <source>
        <strain>Berkeley</strain>
    </source>
</reference>
<reference key="3">
    <citation type="journal article" date="2002" name="Genome Biol.">
        <title>A Drosophila full-length cDNA resource.</title>
        <authorList>
            <person name="Stapleton M."/>
            <person name="Carlson J.W."/>
            <person name="Brokstein P."/>
            <person name="Yu C."/>
            <person name="Champe M."/>
            <person name="George R.A."/>
            <person name="Guarin H."/>
            <person name="Kronmiller B."/>
            <person name="Pacleb J.M."/>
            <person name="Park S."/>
            <person name="Wan K.H."/>
            <person name="Rubin G.M."/>
            <person name="Celniker S.E."/>
        </authorList>
    </citation>
    <scope>NUCLEOTIDE SEQUENCE [LARGE SCALE MRNA]</scope>
    <source>
        <strain>Berkeley</strain>
        <tissue>Head</tissue>
    </source>
</reference>
<accession>Q9VED0</accession>
<dbReference type="EMBL" id="AE014297">
    <property type="protein sequence ID" value="AAF55495.2"/>
    <property type="molecule type" value="Genomic_DNA"/>
</dbReference>
<dbReference type="EMBL" id="AY058285">
    <property type="protein sequence ID" value="AAL13514.1"/>
    <property type="molecule type" value="mRNA"/>
</dbReference>
<dbReference type="RefSeq" id="NP_001287385.1">
    <property type="nucleotide sequence ID" value="NM_001300456.1"/>
</dbReference>
<dbReference type="RefSeq" id="NP_650678.1">
    <property type="nucleotide sequence ID" value="NM_142421.4"/>
</dbReference>
<dbReference type="SMR" id="Q9VED0"/>
<dbReference type="FunCoup" id="Q9VED0">
    <property type="interactions" value="816"/>
</dbReference>
<dbReference type="IntAct" id="Q9VED0">
    <property type="interactions" value="3"/>
</dbReference>
<dbReference type="STRING" id="7227.FBpp0310956"/>
<dbReference type="GlyGen" id="Q9VED0">
    <property type="glycosylation" value="2 sites"/>
</dbReference>
<dbReference type="PaxDb" id="7227-FBpp0083043"/>
<dbReference type="DNASU" id="42165"/>
<dbReference type="EnsemblMetazoa" id="FBtr0083623">
    <property type="protein sequence ID" value="FBpp0083043"/>
    <property type="gene ID" value="FBgn0038569"/>
</dbReference>
<dbReference type="EnsemblMetazoa" id="FBtr0344646">
    <property type="protein sequence ID" value="FBpp0310956"/>
    <property type="gene ID" value="FBgn0038569"/>
</dbReference>
<dbReference type="GeneID" id="42165"/>
<dbReference type="KEGG" id="dme:Dmel_CG7218"/>
<dbReference type="UCSC" id="CG7218-RA">
    <property type="organism name" value="d. melanogaster"/>
</dbReference>
<dbReference type="AGR" id="FB:FBgn0038569"/>
<dbReference type="FlyBase" id="FBgn0038569">
    <property type="gene designation" value="CG7218"/>
</dbReference>
<dbReference type="VEuPathDB" id="VectorBase:FBgn0038569"/>
<dbReference type="eggNOG" id="KOG2490">
    <property type="taxonomic scope" value="Eukaryota"/>
</dbReference>
<dbReference type="GeneTree" id="ENSGT00390000010628"/>
<dbReference type="HOGENOM" id="CLU_003655_3_1_1"/>
<dbReference type="InParanoid" id="Q9VED0"/>
<dbReference type="OMA" id="IVMIQTM"/>
<dbReference type="OrthoDB" id="29023at2759"/>
<dbReference type="PhylomeDB" id="Q9VED0"/>
<dbReference type="BioGRID-ORCS" id="42165">
    <property type="hits" value="0 hits in 1 CRISPR screen"/>
</dbReference>
<dbReference type="GenomeRNAi" id="42165"/>
<dbReference type="PRO" id="PR:Q9VED0"/>
<dbReference type="Proteomes" id="UP000000803">
    <property type="component" value="Chromosome 3R"/>
</dbReference>
<dbReference type="Bgee" id="FBgn0038569">
    <property type="expression patterns" value="Expressed in eye photoreceptor cell (Drosophila) in open tracheal system trachea and 96 other cell types or tissues"/>
</dbReference>
<dbReference type="ExpressionAtlas" id="Q9VED0">
    <property type="expression patterns" value="baseline and differential"/>
</dbReference>
<dbReference type="GO" id="GO:0036064">
    <property type="term" value="C:ciliary basal body"/>
    <property type="evidence" value="ECO:0000318"/>
    <property type="project" value="GO_Central"/>
</dbReference>
<dbReference type="GO" id="GO:0005789">
    <property type="term" value="C:endoplasmic reticulum membrane"/>
    <property type="evidence" value="ECO:0000318"/>
    <property type="project" value="GO_Central"/>
</dbReference>
<dbReference type="GO" id="GO:0045724">
    <property type="term" value="P:positive regulation of cilium assembly"/>
    <property type="evidence" value="ECO:0000318"/>
    <property type="project" value="GO_Central"/>
</dbReference>
<dbReference type="InterPro" id="IPR008010">
    <property type="entry name" value="Tatp1"/>
</dbReference>
<dbReference type="PANTHER" id="PTHR13317">
    <property type="entry name" value="TRANSMEMBRANE ANTERIOR POSTERIOR TRANSFORMATION PROTEIN 1 HOMOLOG"/>
    <property type="match status" value="1"/>
</dbReference>
<dbReference type="PANTHER" id="PTHR13317:SF4">
    <property type="entry name" value="TRANSMEMBRANE ANTERIOR POSTERIOR TRANSFORMATION PROTEIN 1 HOMOLOG"/>
    <property type="match status" value="1"/>
</dbReference>
<dbReference type="Pfam" id="PF05346">
    <property type="entry name" value="DUF747"/>
    <property type="match status" value="1"/>
</dbReference>
<proteinExistence type="evidence at transcript level"/>
<organism>
    <name type="scientific">Drosophila melanogaster</name>
    <name type="common">Fruit fly</name>
    <dbReference type="NCBI Taxonomy" id="7227"/>
    <lineage>
        <taxon>Eukaryota</taxon>
        <taxon>Metazoa</taxon>
        <taxon>Ecdysozoa</taxon>
        <taxon>Arthropoda</taxon>
        <taxon>Hexapoda</taxon>
        <taxon>Insecta</taxon>
        <taxon>Pterygota</taxon>
        <taxon>Neoptera</taxon>
        <taxon>Endopterygota</taxon>
        <taxon>Diptera</taxon>
        <taxon>Brachycera</taxon>
        <taxon>Muscomorpha</taxon>
        <taxon>Ephydroidea</taxon>
        <taxon>Drosophilidae</taxon>
        <taxon>Drosophila</taxon>
        <taxon>Sophophora</taxon>
    </lineage>
</organism>
<sequence length="676" mass="75566">MNATLNSAGGKRQLRFRGDVTGSRVEELHHQQQEEQKQKAPLAQDDVAATPTATPAAGSAQQRLQSGTAETCTNTFYDFFKVEMTRGYMLEHDEERYSARRQKIYSFMRIPRDLERFMVYGIMQCADSFLYIHTFLPVRFVMAVWALVSRTVARIFRLRSSGQRLLSPAEICDLLKGVIWMTVTLIMLLVDTNRVYHIIKSQSIIKLYIFYNMLEVGDRLLSAFGQDTIDALFWTATEPKNSKREHFGVLTHVLFTLIYVFLHSGLIMFQATCLNVAVNSNNKGLLTIMISNNFVELKGSVFKKFDKNNLFQLTCSDVRERFHLSVLLFIVVIQTMKEFDWSITQFCVMLPDCFAVLFTEILIDWVKHAFITRFNELPESIYREYTTSLAYDMTQTRQKHAFSDHSDLVARRMGFIPFPLAVVLIKAIYTAVSFENLAAWLLFLLAYLFAMGLRICLTICALGKACKLMKEHQTERNSSTPSSMTNVPVIGAAAPVSAAATGGQNHNNNNNNNNNSISIGSKPAQVTTLLTPPSAGHLDVSKNFSRTSIASTSTPKKAVSEQELDVTNSLELGATALFSNSDVDLDDVCLNEQVTNTNTSSAVQEVYQEQDLVRSQPDLMLLNNSGDGVTSAKAKKATQRLPKRTHKRSESEPGMPSMVEKGGAAGIAGGNQTTQL</sequence>
<name>TAPT1_DROME</name>
<protein>
    <recommendedName>
        <fullName>Protein TAPT1 homolog</fullName>
    </recommendedName>
</protein>
<gene>
    <name type="ORF">CG7218</name>
</gene>
<feature type="chain" id="PRO_0000328878" description="Protein TAPT1 homolog">
    <location>
        <begin position="1"/>
        <end position="676"/>
    </location>
</feature>
<feature type="transmembrane region" description="Helical" evidence="1">
    <location>
        <begin position="128"/>
        <end position="148"/>
    </location>
</feature>
<feature type="transmembrane region" description="Helical" evidence="1">
    <location>
        <begin position="170"/>
        <end position="190"/>
    </location>
</feature>
<feature type="transmembrane region" description="Helical" evidence="1">
    <location>
        <begin position="249"/>
        <end position="269"/>
    </location>
</feature>
<feature type="transmembrane region" description="Helical" evidence="1">
    <location>
        <begin position="346"/>
        <end position="366"/>
    </location>
</feature>
<feature type="transmembrane region" description="Helical" evidence="1">
    <location>
        <begin position="414"/>
        <end position="434"/>
    </location>
</feature>
<feature type="transmembrane region" description="Helical" evidence="1">
    <location>
        <begin position="437"/>
        <end position="457"/>
    </location>
</feature>
<feature type="region of interest" description="Disordered" evidence="2">
    <location>
        <begin position="1"/>
        <end position="44"/>
    </location>
</feature>
<feature type="region of interest" description="Disordered" evidence="2">
    <location>
        <begin position="625"/>
        <end position="676"/>
    </location>
</feature>
<feature type="compositionally biased region" description="Basic and acidic residues" evidence="2">
    <location>
        <begin position="24"/>
        <end position="38"/>
    </location>
</feature>
<feature type="compositionally biased region" description="Basic residues" evidence="2">
    <location>
        <begin position="633"/>
        <end position="647"/>
    </location>
</feature>
<evidence type="ECO:0000255" key="1"/>
<evidence type="ECO:0000256" key="2">
    <source>
        <dbReference type="SAM" id="MobiDB-lite"/>
    </source>
</evidence>
<evidence type="ECO:0000305" key="3"/>
<comment type="subcellular location">
    <subcellularLocation>
        <location evidence="3">Membrane</location>
        <topology evidence="3">Multi-pass membrane protein</topology>
    </subcellularLocation>
</comment>
<comment type="similarity">
    <text evidence="3">Belongs to the TAPT1 family.</text>
</comment>
<keyword id="KW-0472">Membrane</keyword>
<keyword id="KW-1185">Reference proteome</keyword>
<keyword id="KW-0812">Transmembrane</keyword>
<keyword id="KW-1133">Transmembrane helix</keyword>